<evidence type="ECO:0000255" key="1">
    <source>
        <dbReference type="HAMAP-Rule" id="MF_00614"/>
    </source>
</evidence>
<evidence type="ECO:0000269" key="2">
    <source>
    </source>
</evidence>
<evidence type="ECO:0007829" key="3">
    <source>
        <dbReference type="PDB" id="1B43"/>
    </source>
</evidence>
<evidence type="ECO:0007829" key="4">
    <source>
        <dbReference type="PDB" id="6VBH"/>
    </source>
</evidence>
<accession>O93634</accession>
<organism>
    <name type="scientific">Pyrococcus furiosus (strain ATCC 43587 / DSM 3638 / JCM 8422 / Vc1)</name>
    <dbReference type="NCBI Taxonomy" id="186497"/>
    <lineage>
        <taxon>Archaea</taxon>
        <taxon>Methanobacteriati</taxon>
        <taxon>Methanobacteriota</taxon>
        <taxon>Thermococci</taxon>
        <taxon>Thermococcales</taxon>
        <taxon>Thermococcaceae</taxon>
        <taxon>Pyrococcus</taxon>
    </lineage>
</organism>
<keyword id="KW-0002">3D-structure</keyword>
<keyword id="KW-0227">DNA damage</keyword>
<keyword id="KW-0234">DNA repair</keyword>
<keyword id="KW-0235">DNA replication</keyword>
<keyword id="KW-0255">Endonuclease</keyword>
<keyword id="KW-0269">Exonuclease</keyword>
<keyword id="KW-0378">Hydrolase</keyword>
<keyword id="KW-0460">Magnesium</keyword>
<keyword id="KW-0479">Metal-binding</keyword>
<keyword id="KW-0540">Nuclease</keyword>
<keyword id="KW-1185">Reference proteome</keyword>
<reference key="1">
    <citation type="journal article" date="1999" name="J. Mol. Evol.">
        <title>DNA repair systems in archaea: mementos from the last universal common ancestor?</title>
        <authorList>
            <person name="DiRuggiero J."/>
            <person name="Brown J.R."/>
            <person name="Bogert A.P."/>
            <person name="Robb F.T."/>
        </authorList>
    </citation>
    <scope>NUCLEOTIDE SEQUENCE [GENOMIC DNA]</scope>
    <scope>FUNCTION</scope>
    <source>
        <strain>ATCC 43587 / DSM 3638 / JCM 8422 / Vc1</strain>
    </source>
</reference>
<reference key="2">
    <citation type="journal article" date="1999" name="Genetics">
        <title>Divergence of the hyperthermophilic archaea Pyrococcus furiosus and P. horikoshii inferred from complete genomic sequences.</title>
        <authorList>
            <person name="Maeder D.L."/>
            <person name="Weiss R.B."/>
            <person name="Dunn D.M."/>
            <person name="Cherry J.L."/>
            <person name="Gonzalez J.M."/>
            <person name="DiRuggiero J."/>
            <person name="Robb F.T."/>
        </authorList>
    </citation>
    <scope>NUCLEOTIDE SEQUENCE [LARGE SCALE GENOMIC DNA]</scope>
    <source>
        <strain>ATCC 43587 / DSM 3638 / JCM 8422 / Vc1</strain>
    </source>
</reference>
<reference key="3">
    <citation type="journal article" date="1998" name="Cell">
        <title>Structure of the DNA repair and replication endonuclease and exonuclease FEN-1: coupling DNA and PCNA binding to FEN-1 activity.</title>
        <authorList>
            <person name="Hosfield D.J."/>
            <person name="Mol C.D."/>
            <person name="Shen B."/>
            <person name="Tainer J.A."/>
        </authorList>
    </citation>
    <scope>X-RAY CRYSTALLOGRAPHY (2.0 ANGSTROMS)</scope>
</reference>
<proteinExistence type="evidence at protein level"/>
<comment type="function">
    <text evidence="2">Structure-specific nuclease with 5'-flap endonuclease and 5'-3' exonuclease activities involved in DNA replication and repair. During DNA replication, cleaves the 5'-overhanging flap structure that is generated by displacement synthesis when DNA polymerase encounters the 5'-end of a downstream Okazaki fragment. Binds the unpaired 3'-DNA end and kinks the DNA to facilitate 5' cleavage specificity. Cleaves one nucleotide into the double-stranded DNA from the junction in flap DNA, leaving a nick for ligation. Also involved in the base excision repair (BER) pathway. Acts as a genome stabilization factor that prevents flaps from equilibrating into structures that lead to duplications and deletions. Also possesses 5'-3' exonuclease activity on nicked or gapped double-stranded DNA.</text>
</comment>
<comment type="cofactor">
    <cofactor evidence="1">
        <name>Mg(2+)</name>
        <dbReference type="ChEBI" id="CHEBI:18420"/>
    </cofactor>
    <text evidence="1">Binds 2 magnesium ions per subunit. They probably participate in the reaction catalyzed by the enzyme. May bind an additional third magnesium ion after substrate binding.</text>
</comment>
<comment type="subunit">
    <text evidence="1">Interacts with PCNA. PCNA stimulates the nuclease activity without altering cleavage specificity.</text>
</comment>
<comment type="similarity">
    <text evidence="1">Belongs to the XPG/RAD2 endonuclease family. FEN1 subfamily.</text>
</comment>
<protein>
    <recommendedName>
        <fullName evidence="1">Flap endonuclease 1</fullName>
        <shortName evidence="1">FEN-1</shortName>
        <ecNumber evidence="1">3.1.-.-</ecNumber>
    </recommendedName>
    <alternativeName>
        <fullName evidence="1">Flap structure-specific endonuclease 1</fullName>
    </alternativeName>
</protein>
<dbReference type="EC" id="3.1.-.-" evidence="1"/>
<dbReference type="EMBL" id="AF013497">
    <property type="protein sequence ID" value="AAD01514.1"/>
    <property type="molecule type" value="Genomic_DNA"/>
</dbReference>
<dbReference type="EMBL" id="AE009950">
    <property type="protein sequence ID" value="AAL81538.1"/>
    <property type="molecule type" value="Genomic_DNA"/>
</dbReference>
<dbReference type="PIR" id="T46893">
    <property type="entry name" value="T46893"/>
</dbReference>
<dbReference type="RefSeq" id="WP_011012561.1">
    <property type="nucleotide sequence ID" value="NZ_CP023154.1"/>
</dbReference>
<dbReference type="PDB" id="1B43">
    <property type="method" value="X-ray"/>
    <property type="resolution" value="2.00 A"/>
    <property type="chains" value="A/B=1-340"/>
</dbReference>
<dbReference type="PDB" id="6VBH">
    <property type="method" value="X-ray"/>
    <property type="resolution" value="2.00 A"/>
    <property type="chains" value="A=12-128"/>
</dbReference>
<dbReference type="PDBsum" id="1B43"/>
<dbReference type="PDBsum" id="6VBH"/>
<dbReference type="SMR" id="O93634"/>
<dbReference type="STRING" id="186497.PF1414"/>
<dbReference type="PaxDb" id="186497-PF1414"/>
<dbReference type="GeneID" id="41713224"/>
<dbReference type="KEGG" id="pfu:PF1414"/>
<dbReference type="PATRIC" id="fig|186497.12.peg.1477"/>
<dbReference type="eggNOG" id="arCOG04050">
    <property type="taxonomic scope" value="Archaea"/>
</dbReference>
<dbReference type="HOGENOM" id="CLU_032444_0_0_2"/>
<dbReference type="OrthoDB" id="9593at2157"/>
<dbReference type="PhylomeDB" id="O93634"/>
<dbReference type="BRENDA" id="3.1.99.B1">
    <property type="organism ID" value="5243"/>
</dbReference>
<dbReference type="EvolutionaryTrace" id="O93634"/>
<dbReference type="Proteomes" id="UP000001013">
    <property type="component" value="Chromosome"/>
</dbReference>
<dbReference type="GO" id="GO:0008409">
    <property type="term" value="F:5'-3' exonuclease activity"/>
    <property type="evidence" value="ECO:0007669"/>
    <property type="project" value="UniProtKB-UniRule"/>
</dbReference>
<dbReference type="GO" id="GO:0017108">
    <property type="term" value="F:5'-flap endonuclease activity"/>
    <property type="evidence" value="ECO:0007669"/>
    <property type="project" value="UniProtKB-UniRule"/>
</dbReference>
<dbReference type="GO" id="GO:0003677">
    <property type="term" value="F:DNA binding"/>
    <property type="evidence" value="ECO:0007669"/>
    <property type="project" value="UniProtKB-UniRule"/>
</dbReference>
<dbReference type="GO" id="GO:0000287">
    <property type="term" value="F:magnesium ion binding"/>
    <property type="evidence" value="ECO:0007669"/>
    <property type="project" value="UniProtKB-UniRule"/>
</dbReference>
<dbReference type="GO" id="GO:0006281">
    <property type="term" value="P:DNA repair"/>
    <property type="evidence" value="ECO:0007669"/>
    <property type="project" value="UniProtKB-UniRule"/>
</dbReference>
<dbReference type="GO" id="GO:0043137">
    <property type="term" value="P:DNA replication, removal of RNA primer"/>
    <property type="evidence" value="ECO:0007669"/>
    <property type="project" value="UniProtKB-UniRule"/>
</dbReference>
<dbReference type="CDD" id="cd09903">
    <property type="entry name" value="H3TH_FEN1-Arc"/>
    <property type="match status" value="1"/>
</dbReference>
<dbReference type="CDD" id="cd09867">
    <property type="entry name" value="PIN_FEN1"/>
    <property type="match status" value="1"/>
</dbReference>
<dbReference type="FunFam" id="1.10.150.20:FF:000087">
    <property type="entry name" value="Flap endonuclease 1"/>
    <property type="match status" value="1"/>
</dbReference>
<dbReference type="FunFam" id="3.40.50.1010:FF:000016">
    <property type="entry name" value="Flap endonuclease 1"/>
    <property type="match status" value="1"/>
</dbReference>
<dbReference type="Gene3D" id="1.10.150.20">
    <property type="entry name" value="5' to 3' exonuclease, C-terminal subdomain"/>
    <property type="match status" value="1"/>
</dbReference>
<dbReference type="Gene3D" id="3.40.50.1010">
    <property type="entry name" value="5'-nuclease"/>
    <property type="match status" value="1"/>
</dbReference>
<dbReference type="HAMAP" id="MF_00614">
    <property type="entry name" value="Fen"/>
    <property type="match status" value="1"/>
</dbReference>
<dbReference type="InterPro" id="IPR036279">
    <property type="entry name" value="5-3_exonuclease_C_sf"/>
</dbReference>
<dbReference type="InterPro" id="IPR023426">
    <property type="entry name" value="Flap_endonuc"/>
</dbReference>
<dbReference type="InterPro" id="IPR019973">
    <property type="entry name" value="Flap_endonuc_arc"/>
</dbReference>
<dbReference type="InterPro" id="IPR008918">
    <property type="entry name" value="HhH2"/>
</dbReference>
<dbReference type="InterPro" id="IPR029060">
    <property type="entry name" value="PIN-like_dom_sf"/>
</dbReference>
<dbReference type="InterPro" id="IPR006086">
    <property type="entry name" value="XPG-I_dom"/>
</dbReference>
<dbReference type="InterPro" id="IPR006084">
    <property type="entry name" value="XPG/Rad2"/>
</dbReference>
<dbReference type="InterPro" id="IPR019974">
    <property type="entry name" value="XPG_CS"/>
</dbReference>
<dbReference type="InterPro" id="IPR006085">
    <property type="entry name" value="XPG_DNA_repair_N"/>
</dbReference>
<dbReference type="NCBIfam" id="TIGR03674">
    <property type="entry name" value="fen_arch"/>
    <property type="match status" value="1"/>
</dbReference>
<dbReference type="PANTHER" id="PTHR11081:SF9">
    <property type="entry name" value="FLAP ENDONUCLEASE 1"/>
    <property type="match status" value="1"/>
</dbReference>
<dbReference type="PANTHER" id="PTHR11081">
    <property type="entry name" value="FLAP ENDONUCLEASE FAMILY MEMBER"/>
    <property type="match status" value="1"/>
</dbReference>
<dbReference type="Pfam" id="PF00867">
    <property type="entry name" value="XPG_I"/>
    <property type="match status" value="1"/>
</dbReference>
<dbReference type="Pfam" id="PF00752">
    <property type="entry name" value="XPG_N"/>
    <property type="match status" value="1"/>
</dbReference>
<dbReference type="PRINTS" id="PR00853">
    <property type="entry name" value="XPGRADSUPER"/>
</dbReference>
<dbReference type="SMART" id="SM00279">
    <property type="entry name" value="HhH2"/>
    <property type="match status" value="1"/>
</dbReference>
<dbReference type="SMART" id="SM00484">
    <property type="entry name" value="XPGI"/>
    <property type="match status" value="1"/>
</dbReference>
<dbReference type="SMART" id="SM00485">
    <property type="entry name" value="XPGN"/>
    <property type="match status" value="1"/>
</dbReference>
<dbReference type="SUPFAM" id="SSF47807">
    <property type="entry name" value="5' to 3' exonuclease, C-terminal subdomain"/>
    <property type="match status" value="1"/>
</dbReference>
<dbReference type="SUPFAM" id="SSF88723">
    <property type="entry name" value="PIN domain-like"/>
    <property type="match status" value="1"/>
</dbReference>
<dbReference type="PROSITE" id="PS00841">
    <property type="entry name" value="XPG_1"/>
    <property type="match status" value="1"/>
</dbReference>
<name>FEN_PYRFU</name>
<feature type="chain" id="PRO_0000154061" description="Flap endonuclease 1">
    <location>
        <begin position="1"/>
        <end position="340"/>
    </location>
</feature>
<feature type="region of interest" description="N-domain">
    <location>
        <begin position="1"/>
        <end position="98"/>
    </location>
</feature>
<feature type="region of interest" description="I-domain">
    <location>
        <begin position="116"/>
        <end position="258"/>
    </location>
</feature>
<feature type="region of interest" description="Interaction with PCNA" evidence="1">
    <location>
        <begin position="330"/>
        <end position="338"/>
    </location>
</feature>
<feature type="binding site" evidence="1">
    <location>
        <position position="27"/>
    </location>
    <ligand>
        <name>Mg(2+)</name>
        <dbReference type="ChEBI" id="CHEBI:18420"/>
        <label>1</label>
    </ligand>
</feature>
<feature type="binding site" evidence="1">
    <location>
        <position position="80"/>
    </location>
    <ligand>
        <name>Mg(2+)</name>
        <dbReference type="ChEBI" id="CHEBI:18420"/>
        <label>1</label>
    </ligand>
</feature>
<feature type="binding site" evidence="1">
    <location>
        <position position="152"/>
    </location>
    <ligand>
        <name>Mg(2+)</name>
        <dbReference type="ChEBI" id="CHEBI:18420"/>
        <label>1</label>
    </ligand>
</feature>
<feature type="binding site" evidence="1">
    <location>
        <position position="154"/>
    </location>
    <ligand>
        <name>Mg(2+)</name>
        <dbReference type="ChEBI" id="CHEBI:18420"/>
        <label>1</label>
    </ligand>
</feature>
<feature type="binding site" evidence="1">
    <location>
        <position position="173"/>
    </location>
    <ligand>
        <name>Mg(2+)</name>
        <dbReference type="ChEBI" id="CHEBI:18420"/>
        <label>2</label>
    </ligand>
</feature>
<feature type="binding site" evidence="1">
    <location>
        <position position="175"/>
    </location>
    <ligand>
        <name>Mg(2+)</name>
        <dbReference type="ChEBI" id="CHEBI:18420"/>
        <label>2</label>
    </ligand>
</feature>
<feature type="binding site" evidence="1">
    <location>
        <position position="236"/>
    </location>
    <ligand>
        <name>Mg(2+)</name>
        <dbReference type="ChEBI" id="CHEBI:18420"/>
        <label>2</label>
    </ligand>
</feature>
<feature type="helix" evidence="3">
    <location>
        <begin position="6"/>
        <end position="8"/>
    </location>
</feature>
<feature type="strand" evidence="4">
    <location>
        <begin position="12"/>
        <end position="14"/>
    </location>
</feature>
<feature type="helix" evidence="4">
    <location>
        <begin position="16"/>
        <end position="19"/>
    </location>
</feature>
<feature type="strand" evidence="4">
    <location>
        <begin position="23"/>
        <end position="27"/>
    </location>
</feature>
<feature type="helix" evidence="4">
    <location>
        <begin position="28"/>
        <end position="32"/>
    </location>
</feature>
<feature type="helix" evidence="4">
    <location>
        <begin position="57"/>
        <end position="70"/>
    </location>
</feature>
<feature type="strand" evidence="4">
    <location>
        <begin position="74"/>
        <end position="79"/>
    </location>
</feature>
<feature type="helix" evidence="4">
    <location>
        <begin position="90"/>
        <end position="93"/>
    </location>
</feature>
<feature type="strand" evidence="4">
    <location>
        <begin position="96"/>
        <end position="98"/>
    </location>
</feature>
<feature type="helix" evidence="4">
    <location>
        <begin position="101"/>
        <end position="111"/>
    </location>
</feature>
<feature type="turn" evidence="4">
    <location>
        <begin position="115"/>
        <end position="124"/>
    </location>
</feature>
<feature type="strand" evidence="4">
    <location>
        <begin position="125"/>
        <end position="127"/>
    </location>
</feature>
<feature type="helix" evidence="3">
    <location>
        <begin position="129"/>
        <end position="142"/>
    </location>
</feature>
<feature type="strand" evidence="3">
    <location>
        <begin position="146"/>
        <end position="148"/>
    </location>
</feature>
<feature type="helix" evidence="3">
    <location>
        <begin position="153"/>
        <end position="162"/>
    </location>
</feature>
<feature type="strand" evidence="3">
    <location>
        <begin position="165"/>
        <end position="170"/>
    </location>
</feature>
<feature type="strand" evidence="3">
    <location>
        <begin position="172"/>
        <end position="174"/>
    </location>
</feature>
<feature type="helix" evidence="3">
    <location>
        <begin position="175"/>
        <end position="178"/>
    </location>
</feature>
<feature type="strand" evidence="3">
    <location>
        <begin position="182"/>
        <end position="187"/>
    </location>
</feature>
<feature type="turn" evidence="3">
    <location>
        <begin position="188"/>
        <end position="190"/>
    </location>
</feature>
<feature type="strand" evidence="3">
    <location>
        <begin position="192"/>
        <end position="195"/>
    </location>
</feature>
<feature type="strand" evidence="3">
    <location>
        <begin position="202"/>
        <end position="205"/>
    </location>
</feature>
<feature type="strand" evidence="3">
    <location>
        <begin position="208"/>
        <end position="211"/>
    </location>
</feature>
<feature type="helix" evidence="3">
    <location>
        <begin position="212"/>
        <end position="219"/>
    </location>
</feature>
<feature type="helix" evidence="3">
    <location>
        <begin position="223"/>
        <end position="233"/>
    </location>
</feature>
<feature type="helix" evidence="3">
    <location>
        <begin position="247"/>
        <end position="255"/>
    </location>
</feature>
<feature type="helix" evidence="3">
    <location>
        <begin position="260"/>
        <end position="263"/>
    </location>
</feature>
<feature type="helix" evidence="3">
    <location>
        <begin position="265"/>
        <end position="267"/>
    </location>
</feature>
<feature type="helix" evidence="3">
    <location>
        <begin position="272"/>
        <end position="280"/>
    </location>
</feature>
<feature type="helix" evidence="3">
    <location>
        <begin position="297"/>
        <end position="304"/>
    </location>
</feature>
<feature type="turn" evidence="3">
    <location>
        <begin position="305"/>
        <end position="308"/>
    </location>
</feature>
<feature type="helix" evidence="3">
    <location>
        <begin position="312"/>
        <end position="328"/>
    </location>
</feature>
<feature type="helix" evidence="3">
    <location>
        <begin position="329"/>
        <end position="333"/>
    </location>
</feature>
<gene>
    <name evidence="1" type="primary">fen</name>
    <name type="synonym">fen-1</name>
    <name type="ordered locus">PF1414</name>
</gene>
<sequence length="340" mass="38739">MGVPIGEIIPRKEIELENLYGKKIAIDALNAIYQFLSTIRQKDGTPLMDSKGRITSHLSGLFYRTINLMEAGIKPVYVFDGEPPEFKKKELEKRREAREEAEEKWREALEKGEIEEARKYAQRATRVNEMLIEDAKKLLELMGIPIVQAPSEGEAQAAYMAAKGSVYASASQDYDSLLFGAPRLVRNLTITGKRKLPGKNVYVEIKPELIILEEVLKELKLTREKLIELAILVGTDYNPGGIKGIGLKKALEIVRHSKDPLAKFQKQSDVDLYAIKEFFLNPPVTDNYNLVWRDPDEEGILKFLCDEHDFSEERVKNGLERLKKAIKSGKQSTLESWFKR</sequence>